<gene>
    <name type="primary">LTE1</name>
    <name type="ordered locus">KLLA0A04059g</name>
</gene>
<organism>
    <name type="scientific">Kluyveromyces lactis (strain ATCC 8585 / CBS 2359 / DSM 70799 / NBRC 1267 / NRRL Y-1140 / WM37)</name>
    <name type="common">Yeast</name>
    <name type="synonym">Candida sphaerica</name>
    <dbReference type="NCBI Taxonomy" id="284590"/>
    <lineage>
        <taxon>Eukaryota</taxon>
        <taxon>Fungi</taxon>
        <taxon>Dikarya</taxon>
        <taxon>Ascomycota</taxon>
        <taxon>Saccharomycotina</taxon>
        <taxon>Saccharomycetes</taxon>
        <taxon>Saccharomycetales</taxon>
        <taxon>Saccharomycetaceae</taxon>
        <taxon>Kluyveromyces</taxon>
    </lineage>
</organism>
<accession>Q6CY10</accession>
<proteinExistence type="inferred from homology"/>
<evidence type="ECO:0000250" key="1"/>
<evidence type="ECO:0000255" key="2">
    <source>
        <dbReference type="PROSITE-ProRule" id="PRU00135"/>
    </source>
</evidence>
<evidence type="ECO:0000255" key="3">
    <source>
        <dbReference type="PROSITE-ProRule" id="PRU00168"/>
    </source>
</evidence>
<evidence type="ECO:0000256" key="4">
    <source>
        <dbReference type="SAM" id="MobiDB-lite"/>
    </source>
</evidence>
<evidence type="ECO:0000305" key="5"/>
<feature type="chain" id="PRO_0000285406" description="Guanine nucleotide exchange factor LTE1">
    <location>
        <begin position="1"/>
        <end position="1366"/>
    </location>
</feature>
<feature type="domain" description="N-terminal Ras-GEF" evidence="2">
    <location>
        <begin position="37"/>
        <end position="170"/>
    </location>
</feature>
<feature type="domain" description="Ras-GEF" evidence="3">
    <location>
        <begin position="1121"/>
        <end position="1361"/>
    </location>
</feature>
<feature type="region of interest" description="Disordered" evidence="4">
    <location>
        <begin position="290"/>
        <end position="314"/>
    </location>
</feature>
<feature type="region of interest" description="Disordered" evidence="4">
    <location>
        <begin position="661"/>
        <end position="690"/>
    </location>
</feature>
<feature type="region of interest" description="Disordered" evidence="4">
    <location>
        <begin position="955"/>
        <end position="979"/>
    </location>
</feature>
<feature type="compositionally biased region" description="Basic and acidic residues" evidence="4">
    <location>
        <begin position="298"/>
        <end position="314"/>
    </location>
</feature>
<feature type="compositionally biased region" description="Basic and acidic residues" evidence="4">
    <location>
        <begin position="661"/>
        <end position="670"/>
    </location>
</feature>
<feature type="compositionally biased region" description="Polar residues" evidence="4">
    <location>
        <begin position="671"/>
        <end position="690"/>
    </location>
</feature>
<comment type="function">
    <text evidence="1">GDP-GTP exchange factor component of the mitotic exit network (MEN). Fine-tunes the timing of the mitotic exit and couples this event with cytokinesis. May also be involved in proprotein-processing in the secretory pathway (By similarity).</text>
</comment>
<comment type="subcellular location">
    <subcellularLocation>
        <location evidence="1">Cytoplasm</location>
    </subcellularLocation>
    <subcellularLocation>
        <location evidence="1">Bud</location>
    </subcellularLocation>
</comment>
<comment type="similarity">
    <text evidence="5">Belongs to the LTE1 family.</text>
</comment>
<dbReference type="EMBL" id="CR382121">
    <property type="protein sequence ID" value="CAH02767.1"/>
    <property type="molecule type" value="Genomic_DNA"/>
</dbReference>
<dbReference type="RefSeq" id="XP_451179.1">
    <property type="nucleotide sequence ID" value="XM_451179.1"/>
</dbReference>
<dbReference type="SMR" id="Q6CY10"/>
<dbReference type="FunCoup" id="Q6CY10">
    <property type="interactions" value="251"/>
</dbReference>
<dbReference type="STRING" id="284590.Q6CY10"/>
<dbReference type="PaxDb" id="284590-Q6CY10"/>
<dbReference type="KEGG" id="kla:KLLA0_A04059g"/>
<dbReference type="eggNOG" id="KOG3417">
    <property type="taxonomic scope" value="Eukaryota"/>
</dbReference>
<dbReference type="HOGENOM" id="CLU_004883_0_0_1"/>
<dbReference type="InParanoid" id="Q6CY10"/>
<dbReference type="OMA" id="PFILMYD"/>
<dbReference type="Proteomes" id="UP000000598">
    <property type="component" value="Chromosome A"/>
</dbReference>
<dbReference type="GO" id="GO:0005933">
    <property type="term" value="C:cellular bud"/>
    <property type="evidence" value="ECO:0007669"/>
    <property type="project" value="UniProtKB-SubCell"/>
</dbReference>
<dbReference type="GO" id="GO:0005737">
    <property type="term" value="C:cytoplasm"/>
    <property type="evidence" value="ECO:0007669"/>
    <property type="project" value="UniProtKB-SubCell"/>
</dbReference>
<dbReference type="GO" id="GO:0005886">
    <property type="term" value="C:plasma membrane"/>
    <property type="evidence" value="ECO:0007669"/>
    <property type="project" value="TreeGrafter"/>
</dbReference>
<dbReference type="GO" id="GO:0005085">
    <property type="term" value="F:guanyl-nucleotide exchange factor activity"/>
    <property type="evidence" value="ECO:0007669"/>
    <property type="project" value="UniProtKB-KW"/>
</dbReference>
<dbReference type="GO" id="GO:0051301">
    <property type="term" value="P:cell division"/>
    <property type="evidence" value="ECO:0007669"/>
    <property type="project" value="UniProtKB-KW"/>
</dbReference>
<dbReference type="GO" id="GO:0007265">
    <property type="term" value="P:Ras protein signal transduction"/>
    <property type="evidence" value="ECO:0007669"/>
    <property type="project" value="TreeGrafter"/>
</dbReference>
<dbReference type="CDD" id="cd00155">
    <property type="entry name" value="RasGEF"/>
    <property type="match status" value="1"/>
</dbReference>
<dbReference type="CDD" id="cd06224">
    <property type="entry name" value="REM"/>
    <property type="match status" value="1"/>
</dbReference>
<dbReference type="FunFam" id="1.10.840.10:FF:000019">
    <property type="entry name" value="Guanine nucleotide exchange factor LTE1"/>
    <property type="match status" value="1"/>
</dbReference>
<dbReference type="Gene3D" id="1.10.840.10">
    <property type="entry name" value="Ras guanine-nucleotide exchange factors catalytic domain"/>
    <property type="match status" value="1"/>
</dbReference>
<dbReference type="Gene3D" id="1.20.870.10">
    <property type="entry name" value="Son of sevenless (SoS) protein Chain: S domain 1"/>
    <property type="match status" value="1"/>
</dbReference>
<dbReference type="InterPro" id="IPR008937">
    <property type="entry name" value="Ras-like_GEF"/>
</dbReference>
<dbReference type="InterPro" id="IPR000651">
    <property type="entry name" value="Ras-like_Gua-exchang_fac_N"/>
</dbReference>
<dbReference type="InterPro" id="IPR019804">
    <property type="entry name" value="Ras_G-nucl-exch_fac_CS"/>
</dbReference>
<dbReference type="InterPro" id="IPR023578">
    <property type="entry name" value="Ras_GEF_dom_sf"/>
</dbReference>
<dbReference type="InterPro" id="IPR001895">
    <property type="entry name" value="RASGEF_cat_dom"/>
</dbReference>
<dbReference type="InterPro" id="IPR036964">
    <property type="entry name" value="RASGEF_cat_dom_sf"/>
</dbReference>
<dbReference type="PANTHER" id="PTHR23113">
    <property type="entry name" value="GUANINE NUCLEOTIDE EXCHANGE FACTOR"/>
    <property type="match status" value="1"/>
</dbReference>
<dbReference type="PANTHER" id="PTHR23113:SF363">
    <property type="entry name" value="PROTEIN SON OF SEVENLESS"/>
    <property type="match status" value="1"/>
</dbReference>
<dbReference type="Pfam" id="PF00617">
    <property type="entry name" value="RasGEF"/>
    <property type="match status" value="1"/>
</dbReference>
<dbReference type="Pfam" id="PF00618">
    <property type="entry name" value="RasGEF_N"/>
    <property type="match status" value="1"/>
</dbReference>
<dbReference type="SMART" id="SM00147">
    <property type="entry name" value="RasGEF"/>
    <property type="match status" value="1"/>
</dbReference>
<dbReference type="SMART" id="SM00229">
    <property type="entry name" value="RasGEFN"/>
    <property type="match status" value="1"/>
</dbReference>
<dbReference type="SUPFAM" id="SSF48366">
    <property type="entry name" value="Ras GEF"/>
    <property type="match status" value="1"/>
</dbReference>
<dbReference type="PROSITE" id="PS00720">
    <property type="entry name" value="RASGEF"/>
    <property type="match status" value="1"/>
</dbReference>
<dbReference type="PROSITE" id="PS50009">
    <property type="entry name" value="RASGEF_CAT"/>
    <property type="match status" value="1"/>
</dbReference>
<dbReference type="PROSITE" id="PS50212">
    <property type="entry name" value="RASGEF_NTER"/>
    <property type="match status" value="1"/>
</dbReference>
<protein>
    <recommendedName>
        <fullName>Guanine nucleotide exchange factor LTE1</fullName>
    </recommendedName>
</protein>
<reference key="1">
    <citation type="journal article" date="2004" name="Nature">
        <title>Genome evolution in yeasts.</title>
        <authorList>
            <person name="Dujon B."/>
            <person name="Sherman D."/>
            <person name="Fischer G."/>
            <person name="Durrens P."/>
            <person name="Casaregola S."/>
            <person name="Lafontaine I."/>
            <person name="de Montigny J."/>
            <person name="Marck C."/>
            <person name="Neuveglise C."/>
            <person name="Talla E."/>
            <person name="Goffard N."/>
            <person name="Frangeul L."/>
            <person name="Aigle M."/>
            <person name="Anthouard V."/>
            <person name="Babour A."/>
            <person name="Barbe V."/>
            <person name="Barnay S."/>
            <person name="Blanchin S."/>
            <person name="Beckerich J.-M."/>
            <person name="Beyne E."/>
            <person name="Bleykasten C."/>
            <person name="Boisrame A."/>
            <person name="Boyer J."/>
            <person name="Cattolico L."/>
            <person name="Confanioleri F."/>
            <person name="de Daruvar A."/>
            <person name="Despons L."/>
            <person name="Fabre E."/>
            <person name="Fairhead C."/>
            <person name="Ferry-Dumazet H."/>
            <person name="Groppi A."/>
            <person name="Hantraye F."/>
            <person name="Hennequin C."/>
            <person name="Jauniaux N."/>
            <person name="Joyet P."/>
            <person name="Kachouri R."/>
            <person name="Kerrest A."/>
            <person name="Koszul R."/>
            <person name="Lemaire M."/>
            <person name="Lesur I."/>
            <person name="Ma L."/>
            <person name="Muller H."/>
            <person name="Nicaud J.-M."/>
            <person name="Nikolski M."/>
            <person name="Oztas S."/>
            <person name="Ozier-Kalogeropoulos O."/>
            <person name="Pellenz S."/>
            <person name="Potier S."/>
            <person name="Richard G.-F."/>
            <person name="Straub M.-L."/>
            <person name="Suleau A."/>
            <person name="Swennen D."/>
            <person name="Tekaia F."/>
            <person name="Wesolowski-Louvel M."/>
            <person name="Westhof E."/>
            <person name="Wirth B."/>
            <person name="Zeniou-Meyer M."/>
            <person name="Zivanovic Y."/>
            <person name="Bolotin-Fukuhara M."/>
            <person name="Thierry A."/>
            <person name="Bouchier C."/>
            <person name="Caudron B."/>
            <person name="Scarpelli C."/>
            <person name="Gaillardin C."/>
            <person name="Weissenbach J."/>
            <person name="Wincker P."/>
            <person name="Souciet J.-L."/>
        </authorList>
    </citation>
    <scope>NUCLEOTIDE SEQUENCE [LARGE SCALE GENOMIC DNA]</scope>
    <source>
        <strain>ATCC 8585 / CBS 2359 / DSM 70799 / NBRC 1267 / NRRL Y-1140 / WM37</strain>
    </source>
</reference>
<keyword id="KW-0131">Cell cycle</keyword>
<keyword id="KW-0132">Cell division</keyword>
<keyword id="KW-0963">Cytoplasm</keyword>
<keyword id="KW-0344">Guanine-nucleotide releasing factor</keyword>
<keyword id="KW-0498">Mitosis</keyword>
<keyword id="KW-1185">Reference proteome</keyword>
<name>LTE1_KLULA</name>
<sequence length="1366" mass="155254">MSEVVEKADENVVPLFSRPELYPVPSESVLTVDLRDGTVRILKCTLPALLVQLSSPLDKVDYSMLTDFFLVYRNFMSSQKLLDLIQERFQWAIDLRQSDPSSQEKITSEVILVRMFVLVRHWLSNYFAQDFVVDTSLRRQFLQFINGYSPVDRFLDNIIISLKKLWVQNVQIMWEDLENLIVENNVVSRDDWLKWEIEDVPSGSSSETGEGSTKGKRLSFIALQNINNPVLRNESLLSLLHTREKIPLPQQSEDESKKQSTRIKQRTGSMLLFPENASNGLSINEKLTASGVSPEATPKQEREITDPKNSKDNKHILPQLSRVTNVSYMMKDLEYPSTPSVDIFVPPTPAKNIEFILQTSYMETDLPEQSNGSDSTNTVNGNNTNHKGILGLLSKWKLNHQRKPTVNPVQNPPRVENLIKYVFSISSLDNHANPLPDSLSSMFDILSARTIDEVEYLVSVESDLLAKLEAKKLTTEISKLETNEDESQDYSVIDNLNLYKTVSSIANSVISLSKTLNVRTNKSTTHLLSPSTSALERKNIRNSAPMLYSYNNSRYSITNALMGLPNTNDNSSPKRLVFHDPTRNSPTKKAILANNLNNIGEYNGERDSITSIVTYDSAFSDISSSGNILSQHKGSSNIFMESAPTLKRKLNVNDLRRFNFEKSDSTDDRSCSPQNREATETSATSMESDANDNAIQDEYENENEDIASLITAYEESTSEIDTQCQNNAQIRRPTSGRISITRNYSVASPNSLRSILPKSPLILGNEVFIERDKALAANQDIISELEETTSLLLNDNDRKFTVSRGSVCNDSDSQSISTNLLFSSAQASPQKLVIKEVDVIQEKSEHPDVPTPVLCKQPISKLSETPSIKSIGSRDSEESFDLTSIASKPNRAQSTTLREKYHLEKQATNDIFEEDVENLNPENNKYLFSPDTDSIDFASPEKNLDDLKQQFIDQSTDEQTSLDEEEIATQDNENKDHGIDKKKLEDIMNGIDDTADTSMDPVNLALMKLEGTYDKGEKEIDDKSPSINSELAREVENFQIVQTAALPESARKRQSMFIQRRRNTMIDFSVRDSLIDKDSSCTRLENTDEQIRNLLNQYTLTDSRLKIDNLEQHIPFILMYDSKSVANQLTLIEKEILSEVDWKDLLDLTMSEQLPQFTSWLQLLVQNENLSGIDLAIARFNLTVDWIISEIVMTQDIRLRRNTIQRFIHIAEHCKELQNYNTLMEIILALNSIVVQKFTETWRLVEPGDLLTWETLKAIPSLEKNYSNIRQLIDEVEPLSGCIPFIVVYLSDLSLNIEKRTWIVHDEVLNYNKFQTNVQIVKNFVQKMQWSKFYNIDIDHELLSKCVYITSLSHDEINSISHKSPI</sequence>